<sequence>MRTEYCGQLRLSHVGQQVTLCGWVNRRRDLGSLIFIDMRDREGIVQVFFDPDRADALKLASELRNEFCIQVTGTVRARDAKNVNADMATGEIEVLASSLTIINRADSLPLDANHVNTEEARLKYRYLDLRRPEMAQRLKTRAKITSLVRRFMDDHGFLDIETPMLTKATPEGARDYLVPSRVHKGKFYALPQSPQLFKQLLMMSGFDRYYQIVKCFRDEDLRADRQPEFTQIDVETSFMTAPQVREVMEALVRHLWLEVKGVDLGDFPVMTFAEAERRYGSDKPDLRNPMELVDVADLLKSVEFAVFAGPANDPKGRVAALRVPGGAQLSRKQIDDYGNFVKIYGAKGLAYIKVNERAKGLDGINSPVAKFLTADIVEAILERTGAQDGDMIFFGADNKKVVADALGALRLKLGKDLSLTDEDKWAPLWVIDFPMFEDDGEGGLTAMHHPFTAPRDMTASELKTAPEEAVANAYDMVINGYEVGGGSVRIHNGEMQQTVFGILGINEQEQREKFGFLLDALKYGTPPHAGLAFGLDRLTMLLTGTDNIRDVIAFPKTTAAACLMTEAPSFANQAALTELGIPVVKKAENN</sequence>
<protein>
    <recommendedName>
        <fullName evidence="1">Aspartate--tRNA ligase</fullName>
        <ecNumber evidence="1">6.1.1.12</ecNumber>
    </recommendedName>
    <alternativeName>
        <fullName evidence="1">Aspartyl-tRNA synthetase</fullName>
        <shortName evidence="1">AspRS</shortName>
    </alternativeName>
</protein>
<evidence type="ECO:0000255" key="1">
    <source>
        <dbReference type="HAMAP-Rule" id="MF_00044"/>
    </source>
</evidence>
<organism>
    <name type="scientific">Salmonella paratyphi A (strain AKU_12601)</name>
    <dbReference type="NCBI Taxonomy" id="554290"/>
    <lineage>
        <taxon>Bacteria</taxon>
        <taxon>Pseudomonadati</taxon>
        <taxon>Pseudomonadota</taxon>
        <taxon>Gammaproteobacteria</taxon>
        <taxon>Enterobacterales</taxon>
        <taxon>Enterobacteriaceae</taxon>
        <taxon>Salmonella</taxon>
    </lineage>
</organism>
<gene>
    <name evidence="1" type="primary">aspS</name>
    <name type="ordered locus">SSPA0902</name>
</gene>
<feature type="chain" id="PRO_1000091041" description="Aspartate--tRNA ligase">
    <location>
        <begin position="1"/>
        <end position="590"/>
    </location>
</feature>
<feature type="region of interest" description="Aspartate" evidence="1">
    <location>
        <begin position="195"/>
        <end position="198"/>
    </location>
</feature>
<feature type="binding site" evidence="1">
    <location>
        <position position="171"/>
    </location>
    <ligand>
        <name>L-aspartate</name>
        <dbReference type="ChEBI" id="CHEBI:29991"/>
    </ligand>
</feature>
<feature type="binding site" evidence="1">
    <location>
        <begin position="217"/>
        <end position="219"/>
    </location>
    <ligand>
        <name>ATP</name>
        <dbReference type="ChEBI" id="CHEBI:30616"/>
    </ligand>
</feature>
<feature type="binding site" evidence="1">
    <location>
        <position position="217"/>
    </location>
    <ligand>
        <name>L-aspartate</name>
        <dbReference type="ChEBI" id="CHEBI:29991"/>
    </ligand>
</feature>
<feature type="binding site" evidence="1">
    <location>
        <position position="226"/>
    </location>
    <ligand>
        <name>ATP</name>
        <dbReference type="ChEBI" id="CHEBI:30616"/>
    </ligand>
</feature>
<feature type="binding site" evidence="1">
    <location>
        <position position="448"/>
    </location>
    <ligand>
        <name>L-aspartate</name>
        <dbReference type="ChEBI" id="CHEBI:29991"/>
    </ligand>
</feature>
<feature type="binding site" evidence="1">
    <location>
        <position position="482"/>
    </location>
    <ligand>
        <name>ATP</name>
        <dbReference type="ChEBI" id="CHEBI:30616"/>
    </ligand>
</feature>
<feature type="binding site" evidence="1">
    <location>
        <position position="489"/>
    </location>
    <ligand>
        <name>L-aspartate</name>
        <dbReference type="ChEBI" id="CHEBI:29991"/>
    </ligand>
</feature>
<feature type="binding site" evidence="1">
    <location>
        <begin position="534"/>
        <end position="537"/>
    </location>
    <ligand>
        <name>ATP</name>
        <dbReference type="ChEBI" id="CHEBI:30616"/>
    </ligand>
</feature>
<keyword id="KW-0030">Aminoacyl-tRNA synthetase</keyword>
<keyword id="KW-0067">ATP-binding</keyword>
<keyword id="KW-0963">Cytoplasm</keyword>
<keyword id="KW-0436">Ligase</keyword>
<keyword id="KW-0547">Nucleotide-binding</keyword>
<keyword id="KW-0648">Protein biosynthesis</keyword>
<accession>B5BH54</accession>
<dbReference type="EC" id="6.1.1.12" evidence="1"/>
<dbReference type="EMBL" id="FM200053">
    <property type="protein sequence ID" value="CAR59046.1"/>
    <property type="molecule type" value="Genomic_DNA"/>
</dbReference>
<dbReference type="RefSeq" id="WP_001258632.1">
    <property type="nucleotide sequence ID" value="NC_011147.1"/>
</dbReference>
<dbReference type="SMR" id="B5BH54"/>
<dbReference type="KEGG" id="sek:SSPA0902"/>
<dbReference type="HOGENOM" id="CLU_014330_3_2_6"/>
<dbReference type="Proteomes" id="UP000001869">
    <property type="component" value="Chromosome"/>
</dbReference>
<dbReference type="GO" id="GO:0005737">
    <property type="term" value="C:cytoplasm"/>
    <property type="evidence" value="ECO:0007669"/>
    <property type="project" value="UniProtKB-SubCell"/>
</dbReference>
<dbReference type="GO" id="GO:0004815">
    <property type="term" value="F:aspartate-tRNA ligase activity"/>
    <property type="evidence" value="ECO:0007669"/>
    <property type="project" value="UniProtKB-UniRule"/>
</dbReference>
<dbReference type="GO" id="GO:0005524">
    <property type="term" value="F:ATP binding"/>
    <property type="evidence" value="ECO:0007669"/>
    <property type="project" value="UniProtKB-UniRule"/>
</dbReference>
<dbReference type="GO" id="GO:0003676">
    <property type="term" value="F:nucleic acid binding"/>
    <property type="evidence" value="ECO:0007669"/>
    <property type="project" value="InterPro"/>
</dbReference>
<dbReference type="GO" id="GO:0006422">
    <property type="term" value="P:aspartyl-tRNA aminoacylation"/>
    <property type="evidence" value="ECO:0007669"/>
    <property type="project" value="UniProtKB-UniRule"/>
</dbReference>
<dbReference type="CDD" id="cd00777">
    <property type="entry name" value="AspRS_core"/>
    <property type="match status" value="1"/>
</dbReference>
<dbReference type="CDD" id="cd04317">
    <property type="entry name" value="EcAspRS_like_N"/>
    <property type="match status" value="1"/>
</dbReference>
<dbReference type="FunFam" id="2.40.50.140:FF:000080">
    <property type="entry name" value="Aspartate--tRNA ligase"/>
    <property type="match status" value="1"/>
</dbReference>
<dbReference type="FunFam" id="3.30.1360.30:FF:000001">
    <property type="entry name" value="Aspartate--tRNA ligase"/>
    <property type="match status" value="1"/>
</dbReference>
<dbReference type="Gene3D" id="3.30.930.10">
    <property type="entry name" value="Bira Bifunctional Protein, Domain 2"/>
    <property type="match status" value="1"/>
</dbReference>
<dbReference type="Gene3D" id="3.30.1360.30">
    <property type="entry name" value="GAD-like domain"/>
    <property type="match status" value="1"/>
</dbReference>
<dbReference type="Gene3D" id="2.40.50.140">
    <property type="entry name" value="Nucleic acid-binding proteins"/>
    <property type="match status" value="1"/>
</dbReference>
<dbReference type="HAMAP" id="MF_00044">
    <property type="entry name" value="Asp_tRNA_synth_type1"/>
    <property type="match status" value="1"/>
</dbReference>
<dbReference type="InterPro" id="IPR004364">
    <property type="entry name" value="Aa-tRNA-synt_II"/>
</dbReference>
<dbReference type="InterPro" id="IPR006195">
    <property type="entry name" value="aa-tRNA-synth_II"/>
</dbReference>
<dbReference type="InterPro" id="IPR045864">
    <property type="entry name" value="aa-tRNA-synth_II/BPL/LPL"/>
</dbReference>
<dbReference type="InterPro" id="IPR004524">
    <property type="entry name" value="Asp-tRNA-ligase_1"/>
</dbReference>
<dbReference type="InterPro" id="IPR047089">
    <property type="entry name" value="Asp-tRNA-ligase_1_N"/>
</dbReference>
<dbReference type="InterPro" id="IPR002312">
    <property type="entry name" value="Asp/Asn-tRNA-synth_IIb"/>
</dbReference>
<dbReference type="InterPro" id="IPR047090">
    <property type="entry name" value="AspRS_core"/>
</dbReference>
<dbReference type="InterPro" id="IPR004115">
    <property type="entry name" value="GAD-like_sf"/>
</dbReference>
<dbReference type="InterPro" id="IPR029351">
    <property type="entry name" value="GAD_dom"/>
</dbReference>
<dbReference type="InterPro" id="IPR012340">
    <property type="entry name" value="NA-bd_OB-fold"/>
</dbReference>
<dbReference type="InterPro" id="IPR004365">
    <property type="entry name" value="NA-bd_OB_tRNA"/>
</dbReference>
<dbReference type="NCBIfam" id="TIGR00459">
    <property type="entry name" value="aspS_bact"/>
    <property type="match status" value="1"/>
</dbReference>
<dbReference type="NCBIfam" id="NF001750">
    <property type="entry name" value="PRK00476.1"/>
    <property type="match status" value="1"/>
</dbReference>
<dbReference type="PANTHER" id="PTHR22594:SF5">
    <property type="entry name" value="ASPARTATE--TRNA LIGASE, MITOCHONDRIAL"/>
    <property type="match status" value="1"/>
</dbReference>
<dbReference type="PANTHER" id="PTHR22594">
    <property type="entry name" value="ASPARTYL/LYSYL-TRNA SYNTHETASE"/>
    <property type="match status" value="1"/>
</dbReference>
<dbReference type="Pfam" id="PF02938">
    <property type="entry name" value="GAD"/>
    <property type="match status" value="1"/>
</dbReference>
<dbReference type="Pfam" id="PF00152">
    <property type="entry name" value="tRNA-synt_2"/>
    <property type="match status" value="1"/>
</dbReference>
<dbReference type="Pfam" id="PF01336">
    <property type="entry name" value="tRNA_anti-codon"/>
    <property type="match status" value="1"/>
</dbReference>
<dbReference type="PRINTS" id="PR01042">
    <property type="entry name" value="TRNASYNTHASP"/>
</dbReference>
<dbReference type="SUPFAM" id="SSF55681">
    <property type="entry name" value="Class II aaRS and biotin synthetases"/>
    <property type="match status" value="1"/>
</dbReference>
<dbReference type="SUPFAM" id="SSF55261">
    <property type="entry name" value="GAD domain-like"/>
    <property type="match status" value="1"/>
</dbReference>
<dbReference type="SUPFAM" id="SSF50249">
    <property type="entry name" value="Nucleic acid-binding proteins"/>
    <property type="match status" value="1"/>
</dbReference>
<dbReference type="PROSITE" id="PS50862">
    <property type="entry name" value="AA_TRNA_LIGASE_II"/>
    <property type="match status" value="1"/>
</dbReference>
<comment type="function">
    <text evidence="1">Catalyzes the attachment of L-aspartate to tRNA(Asp) in a two-step reaction: L-aspartate is first activated by ATP to form Asp-AMP and then transferred to the acceptor end of tRNA(Asp).</text>
</comment>
<comment type="catalytic activity">
    <reaction evidence="1">
        <text>tRNA(Asp) + L-aspartate + ATP = L-aspartyl-tRNA(Asp) + AMP + diphosphate</text>
        <dbReference type="Rhea" id="RHEA:19649"/>
        <dbReference type="Rhea" id="RHEA-COMP:9660"/>
        <dbReference type="Rhea" id="RHEA-COMP:9678"/>
        <dbReference type="ChEBI" id="CHEBI:29991"/>
        <dbReference type="ChEBI" id="CHEBI:30616"/>
        <dbReference type="ChEBI" id="CHEBI:33019"/>
        <dbReference type="ChEBI" id="CHEBI:78442"/>
        <dbReference type="ChEBI" id="CHEBI:78516"/>
        <dbReference type="ChEBI" id="CHEBI:456215"/>
        <dbReference type="EC" id="6.1.1.12"/>
    </reaction>
</comment>
<comment type="subunit">
    <text evidence="1">Homodimer.</text>
</comment>
<comment type="subcellular location">
    <subcellularLocation>
        <location evidence="1">Cytoplasm</location>
    </subcellularLocation>
</comment>
<comment type="similarity">
    <text evidence="1">Belongs to the class-II aminoacyl-tRNA synthetase family. Type 1 subfamily.</text>
</comment>
<proteinExistence type="inferred from homology"/>
<name>SYD_SALPK</name>
<reference key="1">
    <citation type="journal article" date="2009" name="BMC Genomics">
        <title>Pseudogene accumulation in the evolutionary histories of Salmonella enterica serovars Paratyphi A and Typhi.</title>
        <authorList>
            <person name="Holt K.E."/>
            <person name="Thomson N.R."/>
            <person name="Wain J."/>
            <person name="Langridge G.C."/>
            <person name="Hasan R."/>
            <person name="Bhutta Z.A."/>
            <person name="Quail M.A."/>
            <person name="Norbertczak H."/>
            <person name="Walker D."/>
            <person name="Simmonds M."/>
            <person name="White B."/>
            <person name="Bason N."/>
            <person name="Mungall K."/>
            <person name="Dougan G."/>
            <person name="Parkhill J."/>
        </authorList>
    </citation>
    <scope>NUCLEOTIDE SEQUENCE [LARGE SCALE GENOMIC DNA]</scope>
    <source>
        <strain>AKU_12601</strain>
    </source>
</reference>